<proteinExistence type="inferred from homology"/>
<gene>
    <name evidence="1" type="primary">eno1</name>
    <name type="ordered locus">LGAS_0838</name>
</gene>
<sequence>MLKSVIENVHALEIFDSRGNPTVEVFVTLSNGVVGKAEVPSGASTGENEAVELRDGGSRLGGKGVMNAVNNVNTEINDALKGLDPHDQPNIDATMIALDGTPNKGRLGANAILGVSMATACAAAKDNHQPLYRYLGGTDLEMPQTFHNVINGGEHADNGIDIQEFMITPVAKTSFRDGFEKIVNVYHTLKKVLEDMGYETGLGDEGGFAPNMKNSEEALKALHESIIKAGYKPGEDIAIACDCAASYFYNKEDGKYHLEGKVLTDEELADYYDKLLDEFPELISMEDPYDENDVEGMVKFTESHKDRIQIVLDDFICTNPKLLNKAIHEGAGNASLIKLNQIGTVTETLETIRLSRKNGYNTMISHRSGETGDTFIADFAVAVNGGQLKSGAPARSERVEKYNRLLEIEEELGKGERLAFFPDNVDLD</sequence>
<keyword id="KW-0963">Cytoplasm</keyword>
<keyword id="KW-0324">Glycolysis</keyword>
<keyword id="KW-0456">Lyase</keyword>
<keyword id="KW-0460">Magnesium</keyword>
<keyword id="KW-0479">Metal-binding</keyword>
<keyword id="KW-0964">Secreted</keyword>
<comment type="function">
    <text evidence="1">Catalyzes the reversible conversion of 2-phosphoglycerate (2-PG) into phosphoenolpyruvate (PEP). It is essential for the degradation of carbohydrates via glycolysis.</text>
</comment>
<comment type="catalytic activity">
    <reaction evidence="1">
        <text>(2R)-2-phosphoglycerate = phosphoenolpyruvate + H2O</text>
        <dbReference type="Rhea" id="RHEA:10164"/>
        <dbReference type="ChEBI" id="CHEBI:15377"/>
        <dbReference type="ChEBI" id="CHEBI:58289"/>
        <dbReference type="ChEBI" id="CHEBI:58702"/>
        <dbReference type="EC" id="4.2.1.11"/>
    </reaction>
</comment>
<comment type="cofactor">
    <cofactor evidence="1">
        <name>Mg(2+)</name>
        <dbReference type="ChEBI" id="CHEBI:18420"/>
    </cofactor>
    <text evidence="1">Binds a second Mg(2+) ion via substrate during catalysis.</text>
</comment>
<comment type="pathway">
    <text evidence="1">Carbohydrate degradation; glycolysis; pyruvate from D-glyceraldehyde 3-phosphate: step 4/5.</text>
</comment>
<comment type="subcellular location">
    <subcellularLocation>
        <location evidence="1">Cytoplasm</location>
    </subcellularLocation>
    <subcellularLocation>
        <location evidence="1">Secreted</location>
    </subcellularLocation>
    <subcellularLocation>
        <location evidence="1">Cell surface</location>
    </subcellularLocation>
    <text evidence="1">Fractions of enolase are present in both the cytoplasm and on the cell surface.</text>
</comment>
<comment type="similarity">
    <text evidence="1">Belongs to the enolase family.</text>
</comment>
<accession>Q043Z5</accession>
<name>ENO1_LACGA</name>
<organism>
    <name type="scientific">Lactobacillus gasseri (strain ATCC 33323 / DSM 20243 / BCRC 14619 / CIP 102991 / JCM 1131 / KCTC 3163 / NCIMB 11718 / NCTC 13722 / AM63)</name>
    <dbReference type="NCBI Taxonomy" id="324831"/>
    <lineage>
        <taxon>Bacteria</taxon>
        <taxon>Bacillati</taxon>
        <taxon>Bacillota</taxon>
        <taxon>Bacilli</taxon>
        <taxon>Lactobacillales</taxon>
        <taxon>Lactobacillaceae</taxon>
        <taxon>Lactobacillus</taxon>
    </lineage>
</organism>
<feature type="chain" id="PRO_0000280855" description="Enolase 1">
    <location>
        <begin position="1"/>
        <end position="428"/>
    </location>
</feature>
<feature type="region of interest" description="Disordered" evidence="2">
    <location>
        <begin position="38"/>
        <end position="58"/>
    </location>
</feature>
<feature type="active site" description="Proton donor" evidence="1">
    <location>
        <position position="205"/>
    </location>
</feature>
<feature type="active site" description="Proton acceptor" evidence="1">
    <location>
        <position position="338"/>
    </location>
</feature>
<feature type="binding site" evidence="1">
    <location>
        <position position="163"/>
    </location>
    <ligand>
        <name>(2R)-2-phosphoglycerate</name>
        <dbReference type="ChEBI" id="CHEBI:58289"/>
    </ligand>
</feature>
<feature type="binding site" evidence="1">
    <location>
        <position position="242"/>
    </location>
    <ligand>
        <name>Mg(2+)</name>
        <dbReference type="ChEBI" id="CHEBI:18420"/>
    </ligand>
</feature>
<feature type="binding site" evidence="1">
    <location>
        <position position="286"/>
    </location>
    <ligand>
        <name>Mg(2+)</name>
        <dbReference type="ChEBI" id="CHEBI:18420"/>
    </ligand>
</feature>
<feature type="binding site" evidence="1">
    <location>
        <position position="313"/>
    </location>
    <ligand>
        <name>Mg(2+)</name>
        <dbReference type="ChEBI" id="CHEBI:18420"/>
    </ligand>
</feature>
<feature type="binding site" evidence="1">
    <location>
        <position position="338"/>
    </location>
    <ligand>
        <name>(2R)-2-phosphoglycerate</name>
        <dbReference type="ChEBI" id="CHEBI:58289"/>
    </ligand>
</feature>
<feature type="binding site" evidence="1">
    <location>
        <position position="367"/>
    </location>
    <ligand>
        <name>(2R)-2-phosphoglycerate</name>
        <dbReference type="ChEBI" id="CHEBI:58289"/>
    </ligand>
</feature>
<feature type="binding site" evidence="1">
    <location>
        <position position="368"/>
    </location>
    <ligand>
        <name>(2R)-2-phosphoglycerate</name>
        <dbReference type="ChEBI" id="CHEBI:58289"/>
    </ligand>
</feature>
<feature type="binding site" evidence="1">
    <location>
        <position position="389"/>
    </location>
    <ligand>
        <name>(2R)-2-phosphoglycerate</name>
        <dbReference type="ChEBI" id="CHEBI:58289"/>
    </ligand>
</feature>
<dbReference type="EC" id="4.2.1.11" evidence="1"/>
<dbReference type="EMBL" id="CP000413">
    <property type="protein sequence ID" value="ABJ60227.1"/>
    <property type="molecule type" value="Genomic_DNA"/>
</dbReference>
<dbReference type="SMR" id="Q043Z5"/>
<dbReference type="GeneID" id="29639014"/>
<dbReference type="KEGG" id="lga:LGAS_0838"/>
<dbReference type="HOGENOM" id="CLU_031223_2_1_9"/>
<dbReference type="BioCyc" id="LGAS324831:G1G6Y-831-MONOMER"/>
<dbReference type="UniPathway" id="UPA00109">
    <property type="reaction ID" value="UER00187"/>
</dbReference>
<dbReference type="Proteomes" id="UP000000664">
    <property type="component" value="Chromosome"/>
</dbReference>
<dbReference type="GO" id="GO:0009986">
    <property type="term" value="C:cell surface"/>
    <property type="evidence" value="ECO:0007669"/>
    <property type="project" value="UniProtKB-SubCell"/>
</dbReference>
<dbReference type="GO" id="GO:0005576">
    <property type="term" value="C:extracellular region"/>
    <property type="evidence" value="ECO:0007669"/>
    <property type="project" value="UniProtKB-SubCell"/>
</dbReference>
<dbReference type="GO" id="GO:0000015">
    <property type="term" value="C:phosphopyruvate hydratase complex"/>
    <property type="evidence" value="ECO:0007669"/>
    <property type="project" value="InterPro"/>
</dbReference>
<dbReference type="GO" id="GO:0000287">
    <property type="term" value="F:magnesium ion binding"/>
    <property type="evidence" value="ECO:0007669"/>
    <property type="project" value="UniProtKB-UniRule"/>
</dbReference>
<dbReference type="GO" id="GO:0004634">
    <property type="term" value="F:phosphopyruvate hydratase activity"/>
    <property type="evidence" value="ECO:0007669"/>
    <property type="project" value="UniProtKB-UniRule"/>
</dbReference>
<dbReference type="GO" id="GO:0006096">
    <property type="term" value="P:glycolytic process"/>
    <property type="evidence" value="ECO:0007669"/>
    <property type="project" value="UniProtKB-UniRule"/>
</dbReference>
<dbReference type="CDD" id="cd03313">
    <property type="entry name" value="enolase"/>
    <property type="match status" value="1"/>
</dbReference>
<dbReference type="FunFam" id="3.20.20.120:FF:000014">
    <property type="entry name" value="Enolase"/>
    <property type="match status" value="1"/>
</dbReference>
<dbReference type="FunFam" id="3.30.390.10:FF:000001">
    <property type="entry name" value="Enolase"/>
    <property type="match status" value="1"/>
</dbReference>
<dbReference type="Gene3D" id="3.20.20.120">
    <property type="entry name" value="Enolase-like C-terminal domain"/>
    <property type="match status" value="1"/>
</dbReference>
<dbReference type="Gene3D" id="3.30.390.10">
    <property type="entry name" value="Enolase-like, N-terminal domain"/>
    <property type="match status" value="1"/>
</dbReference>
<dbReference type="HAMAP" id="MF_00318">
    <property type="entry name" value="Enolase"/>
    <property type="match status" value="1"/>
</dbReference>
<dbReference type="InterPro" id="IPR000941">
    <property type="entry name" value="Enolase"/>
</dbReference>
<dbReference type="InterPro" id="IPR036849">
    <property type="entry name" value="Enolase-like_C_sf"/>
</dbReference>
<dbReference type="InterPro" id="IPR029017">
    <property type="entry name" value="Enolase-like_N"/>
</dbReference>
<dbReference type="InterPro" id="IPR020810">
    <property type="entry name" value="Enolase_C"/>
</dbReference>
<dbReference type="InterPro" id="IPR020809">
    <property type="entry name" value="Enolase_CS"/>
</dbReference>
<dbReference type="InterPro" id="IPR020811">
    <property type="entry name" value="Enolase_N"/>
</dbReference>
<dbReference type="NCBIfam" id="TIGR01060">
    <property type="entry name" value="eno"/>
    <property type="match status" value="1"/>
</dbReference>
<dbReference type="PANTHER" id="PTHR11902">
    <property type="entry name" value="ENOLASE"/>
    <property type="match status" value="1"/>
</dbReference>
<dbReference type="PANTHER" id="PTHR11902:SF1">
    <property type="entry name" value="ENOLASE"/>
    <property type="match status" value="1"/>
</dbReference>
<dbReference type="Pfam" id="PF00113">
    <property type="entry name" value="Enolase_C"/>
    <property type="match status" value="1"/>
</dbReference>
<dbReference type="Pfam" id="PF03952">
    <property type="entry name" value="Enolase_N"/>
    <property type="match status" value="1"/>
</dbReference>
<dbReference type="PIRSF" id="PIRSF001400">
    <property type="entry name" value="Enolase"/>
    <property type="match status" value="1"/>
</dbReference>
<dbReference type="PRINTS" id="PR00148">
    <property type="entry name" value="ENOLASE"/>
</dbReference>
<dbReference type="SFLD" id="SFLDS00001">
    <property type="entry name" value="Enolase"/>
    <property type="match status" value="1"/>
</dbReference>
<dbReference type="SFLD" id="SFLDF00002">
    <property type="entry name" value="enolase"/>
    <property type="match status" value="1"/>
</dbReference>
<dbReference type="SMART" id="SM01192">
    <property type="entry name" value="Enolase_C"/>
    <property type="match status" value="1"/>
</dbReference>
<dbReference type="SMART" id="SM01193">
    <property type="entry name" value="Enolase_N"/>
    <property type="match status" value="1"/>
</dbReference>
<dbReference type="SUPFAM" id="SSF51604">
    <property type="entry name" value="Enolase C-terminal domain-like"/>
    <property type="match status" value="1"/>
</dbReference>
<dbReference type="SUPFAM" id="SSF54826">
    <property type="entry name" value="Enolase N-terminal domain-like"/>
    <property type="match status" value="1"/>
</dbReference>
<dbReference type="PROSITE" id="PS00164">
    <property type="entry name" value="ENOLASE"/>
    <property type="match status" value="1"/>
</dbReference>
<evidence type="ECO:0000255" key="1">
    <source>
        <dbReference type="HAMAP-Rule" id="MF_00318"/>
    </source>
</evidence>
<evidence type="ECO:0000256" key="2">
    <source>
        <dbReference type="SAM" id="MobiDB-lite"/>
    </source>
</evidence>
<protein>
    <recommendedName>
        <fullName evidence="1">Enolase 1</fullName>
        <ecNumber evidence="1">4.2.1.11</ecNumber>
    </recommendedName>
    <alternativeName>
        <fullName evidence="1">2-phospho-D-glycerate hydro-lyase 1</fullName>
    </alternativeName>
    <alternativeName>
        <fullName evidence="1">2-phosphoglycerate dehydratase 1</fullName>
    </alternativeName>
</protein>
<reference key="1">
    <citation type="journal article" date="2006" name="Proc. Natl. Acad. Sci. U.S.A.">
        <title>Comparative genomics of the lactic acid bacteria.</title>
        <authorList>
            <person name="Makarova K.S."/>
            <person name="Slesarev A."/>
            <person name="Wolf Y.I."/>
            <person name="Sorokin A."/>
            <person name="Mirkin B."/>
            <person name="Koonin E.V."/>
            <person name="Pavlov A."/>
            <person name="Pavlova N."/>
            <person name="Karamychev V."/>
            <person name="Polouchine N."/>
            <person name="Shakhova V."/>
            <person name="Grigoriev I."/>
            <person name="Lou Y."/>
            <person name="Rohksar D."/>
            <person name="Lucas S."/>
            <person name="Huang K."/>
            <person name="Goodstein D.M."/>
            <person name="Hawkins T."/>
            <person name="Plengvidhya V."/>
            <person name="Welker D."/>
            <person name="Hughes J."/>
            <person name="Goh Y."/>
            <person name="Benson A."/>
            <person name="Baldwin K."/>
            <person name="Lee J.-H."/>
            <person name="Diaz-Muniz I."/>
            <person name="Dosti B."/>
            <person name="Smeianov V."/>
            <person name="Wechter W."/>
            <person name="Barabote R."/>
            <person name="Lorca G."/>
            <person name="Altermann E."/>
            <person name="Barrangou R."/>
            <person name="Ganesan B."/>
            <person name="Xie Y."/>
            <person name="Rawsthorne H."/>
            <person name="Tamir D."/>
            <person name="Parker C."/>
            <person name="Breidt F."/>
            <person name="Broadbent J.R."/>
            <person name="Hutkins R."/>
            <person name="O'Sullivan D."/>
            <person name="Steele J."/>
            <person name="Unlu G."/>
            <person name="Saier M.H. Jr."/>
            <person name="Klaenhammer T."/>
            <person name="Richardson P."/>
            <person name="Kozyavkin S."/>
            <person name="Weimer B.C."/>
            <person name="Mills D.A."/>
        </authorList>
    </citation>
    <scope>NUCLEOTIDE SEQUENCE [LARGE SCALE GENOMIC DNA]</scope>
    <source>
        <strain>ATCC 33323 / DSM 20243 / BCRC 14619 / CIP 102991 / JCM 1131 / KCTC 3163 / NCIMB 11718 / NCTC 13722 / AM63</strain>
    </source>
</reference>